<protein>
    <recommendedName>
        <fullName evidence="1">Matrix protein 1</fullName>
        <shortName evidence="1">M1</shortName>
    </recommendedName>
</protein>
<dbReference type="EMBL" id="CY021710">
    <property type="protein sequence ID" value="ABP49328.1"/>
    <property type="molecule type" value="Viral_cRNA"/>
</dbReference>
<dbReference type="SMR" id="A4U6V4"/>
<dbReference type="Proteomes" id="UP000008433">
    <property type="component" value="Genome"/>
</dbReference>
<dbReference type="GO" id="GO:0042025">
    <property type="term" value="C:host cell nucleus"/>
    <property type="evidence" value="ECO:0007669"/>
    <property type="project" value="UniProtKB-SubCell"/>
</dbReference>
<dbReference type="GO" id="GO:0016020">
    <property type="term" value="C:membrane"/>
    <property type="evidence" value="ECO:0007669"/>
    <property type="project" value="UniProtKB-KW"/>
</dbReference>
<dbReference type="GO" id="GO:0055036">
    <property type="term" value="C:virion membrane"/>
    <property type="evidence" value="ECO:0007669"/>
    <property type="project" value="UniProtKB-SubCell"/>
</dbReference>
<dbReference type="GO" id="GO:0003723">
    <property type="term" value="F:RNA binding"/>
    <property type="evidence" value="ECO:0007669"/>
    <property type="project" value="UniProtKB-UniRule"/>
</dbReference>
<dbReference type="GO" id="GO:0039660">
    <property type="term" value="F:structural constituent of virion"/>
    <property type="evidence" value="ECO:0007669"/>
    <property type="project" value="UniProtKB-UniRule"/>
</dbReference>
<dbReference type="GO" id="GO:0046761">
    <property type="term" value="P:viral budding from plasma membrane"/>
    <property type="evidence" value="ECO:0007669"/>
    <property type="project" value="UniProtKB-UniRule"/>
</dbReference>
<dbReference type="FunFam" id="1.10.10.180:FF:000001">
    <property type="entry name" value="Matrix protein 1"/>
    <property type="match status" value="1"/>
</dbReference>
<dbReference type="FunFam" id="1.20.91.10:FF:000001">
    <property type="entry name" value="Matrix protein 1"/>
    <property type="match status" value="1"/>
</dbReference>
<dbReference type="Gene3D" id="1.10.10.180">
    <property type="match status" value="1"/>
</dbReference>
<dbReference type="Gene3D" id="1.20.91.10">
    <property type="match status" value="1"/>
</dbReference>
<dbReference type="HAMAP" id="MF_04068">
    <property type="entry name" value="INFV_M1"/>
    <property type="match status" value="1"/>
</dbReference>
<dbReference type="InterPro" id="IPR036039">
    <property type="entry name" value="Flu_matrix_M1"/>
</dbReference>
<dbReference type="InterPro" id="IPR013188">
    <property type="entry name" value="Flu_matrix_M1_C"/>
</dbReference>
<dbReference type="InterPro" id="IPR001561">
    <property type="entry name" value="Flu_matrix_M1_N"/>
</dbReference>
<dbReference type="InterPro" id="IPR015423">
    <property type="entry name" value="Flu_matrix_M1_N_sub1"/>
</dbReference>
<dbReference type="InterPro" id="IPR015799">
    <property type="entry name" value="Flu_matrix_M1_N_sub2"/>
</dbReference>
<dbReference type="InterPro" id="IPR037533">
    <property type="entry name" value="INFV_M1"/>
</dbReference>
<dbReference type="Pfam" id="PF00598">
    <property type="entry name" value="Flu_M1"/>
    <property type="match status" value="1"/>
</dbReference>
<dbReference type="Pfam" id="PF08289">
    <property type="entry name" value="Flu_M1_C"/>
    <property type="match status" value="1"/>
</dbReference>
<dbReference type="SMART" id="SM00759">
    <property type="entry name" value="Flu_M1_C"/>
    <property type="match status" value="1"/>
</dbReference>
<dbReference type="SUPFAM" id="SSF48145">
    <property type="entry name" value="Influenza virus matrix protein M1"/>
    <property type="match status" value="1"/>
</dbReference>
<reference key="1">
    <citation type="submission" date="2007-04" db="EMBL/GenBank/DDBJ databases">
        <title>The NIAID influenza genome sequencing project.</title>
        <authorList>
            <person name="Ghedin E."/>
            <person name="Spiro D."/>
            <person name="Miller N."/>
            <person name="Zaborsky J."/>
            <person name="Feldblyum T."/>
            <person name="Subbu V."/>
            <person name="Shumway M."/>
            <person name="Sparenborg J."/>
            <person name="Groveman L."/>
            <person name="Halpin R."/>
            <person name="Sitz J."/>
            <person name="Koo H."/>
            <person name="Salzberg S.L."/>
            <person name="Webster R.G."/>
            <person name="Hoffmann E."/>
            <person name="Krauss S."/>
            <person name="Naeve C."/>
            <person name="Bao Y."/>
            <person name="Bolotov P."/>
            <person name="Dernovoy D."/>
            <person name="Kiryutin B."/>
            <person name="Lipman D.J."/>
            <person name="Tatusova T."/>
        </authorList>
    </citation>
    <scope>NUCLEOTIDE SEQUENCE [GENOMIC RNA]</scope>
</reference>
<reference key="2">
    <citation type="submission" date="2007-04" db="EMBL/GenBank/DDBJ databases">
        <authorList>
            <consortium name="The NIAID Influenza Genome Sequencing Consortium"/>
        </authorList>
    </citation>
    <scope>NUCLEOTIDE SEQUENCE [GENOMIC RNA]</scope>
</reference>
<gene>
    <name evidence="1" type="primary">M</name>
</gene>
<comment type="function">
    <text evidence="1">Plays critical roles in virus replication, from virus entry and uncoating to assembly and budding of the virus particle. M1 binding to ribonucleocapsids (RNPs) in nucleus seems to inhibit viral transcription. Interaction of viral NEP with M1-RNP is thought to promote nuclear export of the complex, which is targeted to the virion assembly site at the apical plasma membrane in polarized epithelial cells. Interactions with NA and HA may bring M1, a non-raft-associated protein, into lipid rafts. Forms a continuous shell on the inner side of the lipid bilayer in virion, where it binds the RNP. During virus entry into cell, the M2 ion channel acidifies the internal virion core, inducing M1 dissociation from the RNP. M1-free RNPs are transported to the nucleus, where viral transcription and replication can take place.</text>
</comment>
<comment type="function">
    <text evidence="1">Determines the virion's shape: spherical or filamentous. Clinical isolates of influenza are characterized by the presence of significant proportion of filamentous virions, whereas after multiple passage on eggs or cell culture, virions have only spherical morphology. Filamentous virions are thought to be important to infect neighboring cells, and spherical virions more suited to spread through aerosol between hosts organisms.</text>
</comment>
<comment type="subunit">
    <text evidence="1">Homodimer and homomultimer. Interacts with NEP. Binds ribonucleocapsid by both interacting with genomic RNA and NP protein. May interact with HA and NA. Cannot bind NP without genomic RNA.</text>
</comment>
<comment type="subcellular location">
    <subcellularLocation>
        <location evidence="1">Virion membrane</location>
        <topology evidence="1">Peripheral membrane protein</topology>
        <orientation evidence="1">Cytoplasmic side</orientation>
    </subcellularLocation>
    <subcellularLocation>
        <location evidence="1">Host nucleus</location>
    </subcellularLocation>
</comment>
<comment type="alternative products">
    <event type="alternative splicing"/>
    <isoform>
        <id>A4U6V4-1</id>
        <name>M1</name>
        <sequence type="displayed"/>
    </isoform>
    <isoform>
        <id>A4U6V3-1</id>
        <name>M2</name>
        <sequence type="external"/>
    </isoform>
    <text>Only the first 9 residues are shared by the 2 isoforms.</text>
</comment>
<comment type="miscellaneous">
    <text evidence="1">Most abundant protein in virion. When expressed alone can form virus-like particles in transfected cells.</text>
</comment>
<comment type="similarity">
    <text evidence="1">Belongs to the influenza viruses Matrix protein M1 family.</text>
</comment>
<proteinExistence type="inferred from homology"/>
<organismHost>
    <name type="scientific">Aves</name>
    <dbReference type="NCBI Taxonomy" id="8782"/>
</organismHost>
<organismHost>
    <name type="scientific">Homo sapiens</name>
    <name type="common">Human</name>
    <dbReference type="NCBI Taxonomy" id="9606"/>
</organismHost>
<organismHost>
    <name type="scientific">Sus scrofa</name>
    <name type="common">Pig</name>
    <dbReference type="NCBI Taxonomy" id="9823"/>
</organismHost>
<sequence>MSLLTEVETYVLSIVPSGPLKAEIAQRLEDVFAGKNTDLEALMEWLKTRPILSPLTKGILGFVFTLTVPSERGLQRRRFVQNALNGNGDPNNMDRAVKLYRKLKREITFHGAKEIALSYSAGALASCMGLIYNRMGAVTTEVAFGLVCATCEQIADSQHRSHRQMVTTTNPLIRHENRMVLASTTAKAMEQMAGSSEQAAEAMEVASQARQMVQAMRTIGTHPSSSAGLKDDLLENLQAYQKRMGVQMQRFK</sequence>
<accession>A4U6V4</accession>
<organism>
    <name type="scientific">Influenza A virus (strain A/USA:Huston/AA/1945 H1N1)</name>
    <dbReference type="NCBI Taxonomy" id="425551"/>
    <lineage>
        <taxon>Viruses</taxon>
        <taxon>Riboviria</taxon>
        <taxon>Orthornavirae</taxon>
        <taxon>Negarnaviricota</taxon>
        <taxon>Polyploviricotina</taxon>
        <taxon>Insthoviricetes</taxon>
        <taxon>Articulavirales</taxon>
        <taxon>Orthomyxoviridae</taxon>
        <taxon>Alphainfluenzavirus</taxon>
        <taxon>Alphainfluenzavirus influenzae</taxon>
        <taxon>Influenza A virus</taxon>
    </lineage>
</organism>
<feature type="chain" id="PRO_0000372906" description="Matrix protein 1">
    <location>
        <begin position="1"/>
        <end position="252"/>
    </location>
</feature>
<feature type="region of interest" description="Membrane-binding" evidence="1">
    <location>
        <begin position="1"/>
        <end position="164"/>
    </location>
</feature>
<feature type="region of interest" description="RNP-binding" evidence="1">
    <location>
        <begin position="165"/>
        <end position="252"/>
    </location>
</feature>
<feature type="short sequence motif" description="Nuclear localization signal" evidence="1">
    <location>
        <begin position="101"/>
        <end position="105"/>
    </location>
</feature>
<keyword id="KW-0025">Alternative splicing</keyword>
<keyword id="KW-1048">Host nucleus</keyword>
<keyword id="KW-0472">Membrane</keyword>
<keyword id="KW-0694">RNA-binding</keyword>
<keyword id="KW-0468">Viral matrix protein</keyword>
<keyword id="KW-0946">Virion</keyword>
<name>M1_I45A0</name>
<evidence type="ECO:0000255" key="1">
    <source>
        <dbReference type="HAMAP-Rule" id="MF_04068"/>
    </source>
</evidence>